<comment type="function">
    <text evidence="2">Envelope glycoprotein that binds to host cell entry receptors, promoting the virus entry into host cells. May trigger fusion with host membrane, by recruiting the fusion machinery composed of gB and gH/gL (By similarity).</text>
</comment>
<comment type="subcellular location">
    <subcellularLocation>
        <location evidence="2">Virion membrane</location>
        <topology evidence="2">Single-pass type I membrane protein</topology>
    </subcellularLocation>
    <text evidence="3">During virion morphogenesis, this protein probably accumulates in the endosomes and trans-Golgi where secondary envelopment occurs.</text>
</comment>
<comment type="similarity">
    <text evidence="5">Belongs to the herpesviridae glycoprotein D family.</text>
</comment>
<name>GD_GAHVM</name>
<protein>
    <recommendedName>
        <fullName>Envelope glycoprotein D</fullName>
        <shortName>gD</shortName>
    </recommendedName>
</protein>
<reference key="1">
    <citation type="journal article" date="2000" name="J. Virol.">
        <title>The genome of a very virulent Marek's disease virus.</title>
        <authorList>
            <person name="Tulman E.R."/>
            <person name="Afonso C.L."/>
            <person name="Lu Z."/>
            <person name="Zsak L."/>
            <person name="Rock D.L."/>
            <person name="Kutish G.F."/>
        </authorList>
    </citation>
    <scope>NUCLEOTIDE SEQUENCE [LARGE SCALE GENOMIC DNA]</scope>
</reference>
<gene>
    <name type="primary">MDV094</name>
</gene>
<feature type="signal peptide" evidence="4">
    <location>
        <begin position="1"/>
        <end position="34"/>
    </location>
</feature>
<feature type="chain" id="PRO_0000406596" description="Envelope glycoprotein D">
    <location>
        <begin position="35"/>
        <end position="403"/>
    </location>
</feature>
<feature type="topological domain" description="Virion surface" evidence="4">
    <location>
        <begin position="35"/>
        <end position="357"/>
    </location>
</feature>
<feature type="transmembrane region" description="Helical" evidence="4">
    <location>
        <begin position="358"/>
        <end position="378"/>
    </location>
</feature>
<feature type="topological domain" description="Intravirion" evidence="4">
    <location>
        <begin position="379"/>
        <end position="403"/>
    </location>
</feature>
<feature type="glycosylation site" description="N-linked (GlcNAc...) asparagine; by host" evidence="4">
    <location>
        <position position="87"/>
    </location>
</feature>
<feature type="glycosylation site" description="N-linked (GlcNAc...) asparagine; by host" evidence="4">
    <location>
        <position position="138"/>
    </location>
</feature>
<feature type="glycosylation site" description="N-linked (GlcNAc...) asparagine; by host" evidence="4">
    <location>
        <position position="230"/>
    </location>
</feature>
<feature type="glycosylation site" description="N-linked (GlcNAc...) asparagine; by host" evidence="4">
    <location>
        <position position="306"/>
    </location>
</feature>
<feature type="disulfide bond" evidence="1">
    <location>
        <begin position="88"/>
        <end position="209"/>
    </location>
</feature>
<feature type="disulfide bond" evidence="1">
    <location>
        <begin position="127"/>
        <end position="222"/>
    </location>
</feature>
<feature type="disulfide bond" evidence="1">
    <location>
        <begin position="139"/>
        <end position="148"/>
    </location>
</feature>
<organismHost>
    <name type="scientific">Gallus gallus</name>
    <name type="common">Chicken</name>
    <dbReference type="NCBI Taxonomy" id="9031"/>
</organismHost>
<organism>
    <name type="scientific">Gallid herpesvirus 2 (strain Chicken/Md5/ATCC VR-987)</name>
    <name type="common">GaHV-2</name>
    <name type="synonym">Marek's disease herpesvirus type 1</name>
    <dbReference type="NCBI Taxonomy" id="10389"/>
    <lineage>
        <taxon>Viruses</taxon>
        <taxon>Duplodnaviria</taxon>
        <taxon>Heunggongvirae</taxon>
        <taxon>Peploviricota</taxon>
        <taxon>Herviviricetes</taxon>
        <taxon>Herpesvirales</taxon>
        <taxon>Orthoherpesviridae</taxon>
        <taxon>Alphaherpesvirinae</taxon>
        <taxon>Mardivirus</taxon>
        <taxon>Mardivirus gallidalpha2</taxon>
        <taxon>Gallid alphaherpesvirus 2</taxon>
    </lineage>
</organism>
<proteinExistence type="inferred from homology"/>
<sequence>MNRYRYESIFFRYISSTRMILIICLLLGIGDMSAMGLKKDNSPIIPTLHPKGNENLRATLNEYKIPSPLFDTLDNSYETKHVIYTDNCSFAVLNPFGDPKYTLLSLLLMGRRKYDALVAWFVLGRACGRPIYLREYANCSTNEPFGTCKLKSLGWWDRRYAMTSYIDRDELKLIIAAPSRELSGLYTRLIIINGEPISSDILLTVKETCSFSRRGIKDNKLCKPFSFFVNGTTRLLDMVGTGTPRAHEENVKQWLERIGGKHLPIVVETSMQQVSNLPRSFRDSYFKSPDDDKYDDVKMTSATTNNITTSVDGYTGLTNRPEDFEKAPYITKRPIISVEEASSQSPKISTEKKSRTQIIISLVVLCVMFCFIVIGSGIWILRKHRKTVMYDRRRPSRRAYSRL</sequence>
<accession>Q9E6L6</accession>
<evidence type="ECO:0000250" key="1">
    <source>
        <dbReference type="UniProtKB" id="P57083"/>
    </source>
</evidence>
<evidence type="ECO:0000250" key="2">
    <source>
        <dbReference type="UniProtKB" id="Q05059"/>
    </source>
</evidence>
<evidence type="ECO:0000250" key="3">
    <source>
        <dbReference type="UniProtKB" id="Q69091"/>
    </source>
</evidence>
<evidence type="ECO:0000255" key="4"/>
<evidence type="ECO:0000305" key="5"/>
<keyword id="KW-1015">Disulfide bond</keyword>
<keyword id="KW-0325">Glycoprotein</keyword>
<keyword id="KW-0945">Host-virus interaction</keyword>
<keyword id="KW-0472">Membrane</keyword>
<keyword id="KW-1185">Reference proteome</keyword>
<keyword id="KW-0732">Signal</keyword>
<keyword id="KW-0812">Transmembrane</keyword>
<keyword id="KW-1133">Transmembrane helix</keyword>
<keyword id="KW-1161">Viral attachment to host cell</keyword>
<keyword id="KW-1234">Viral attachment to host entry receptor</keyword>
<keyword id="KW-0261">Viral envelope protein</keyword>
<keyword id="KW-0946">Virion</keyword>
<keyword id="KW-1160">Virus entry into host cell</keyword>
<dbReference type="EMBL" id="AF243438">
    <property type="protein sequence ID" value="AAG14268.1"/>
    <property type="molecule type" value="Genomic_DNA"/>
</dbReference>
<dbReference type="SMR" id="Q9E6L6"/>
<dbReference type="GlyCosmos" id="Q9E6L6">
    <property type="glycosylation" value="4 sites, No reported glycans"/>
</dbReference>
<dbReference type="Proteomes" id="UP000008072">
    <property type="component" value="Segment"/>
</dbReference>
<dbReference type="GO" id="GO:0016020">
    <property type="term" value="C:membrane"/>
    <property type="evidence" value="ECO:0007669"/>
    <property type="project" value="UniProtKB-KW"/>
</dbReference>
<dbReference type="GO" id="GO:0019031">
    <property type="term" value="C:viral envelope"/>
    <property type="evidence" value="ECO:0007669"/>
    <property type="project" value="UniProtKB-KW"/>
</dbReference>
<dbReference type="GO" id="GO:0055036">
    <property type="term" value="C:virion membrane"/>
    <property type="evidence" value="ECO:0007669"/>
    <property type="project" value="UniProtKB-SubCell"/>
</dbReference>
<dbReference type="GO" id="GO:0098670">
    <property type="term" value="P:entry receptor-mediated virion attachment to host cell"/>
    <property type="evidence" value="ECO:0007669"/>
    <property type="project" value="UniProtKB-KW"/>
</dbReference>
<dbReference type="GO" id="GO:0046718">
    <property type="term" value="P:symbiont entry into host cell"/>
    <property type="evidence" value="ECO:0007669"/>
    <property type="project" value="UniProtKB-KW"/>
</dbReference>
<dbReference type="Gene3D" id="2.70.230.10">
    <property type="match status" value="1"/>
</dbReference>
<dbReference type="InterPro" id="IPR002896">
    <property type="entry name" value="Herpes_glycop_dom"/>
</dbReference>
<dbReference type="InterPro" id="IPR036179">
    <property type="entry name" value="Ig-like_dom_sf"/>
</dbReference>
<dbReference type="Pfam" id="PF01537">
    <property type="entry name" value="Herpes_glycop_D"/>
    <property type="match status" value="1"/>
</dbReference>
<dbReference type="SUPFAM" id="SSF48726">
    <property type="entry name" value="Immunoglobulin"/>
    <property type="match status" value="1"/>
</dbReference>